<keyword id="KW-0093">Biotin biosynthesis</keyword>
<keyword id="KW-0663">Pyridoxal phosphate</keyword>
<keyword id="KW-0808">Transferase</keyword>
<name>BIOF_ACIF5</name>
<reference key="1">
    <citation type="submission" date="2008-08" db="EMBL/GenBank/DDBJ databases">
        <title>Complete sequence of Acidithiobacillus ferrooxidans ATCC 53993.</title>
        <authorList>
            <person name="Lucas S."/>
            <person name="Copeland A."/>
            <person name="Lapidus A."/>
            <person name="Glavina del Rio T."/>
            <person name="Dalin E."/>
            <person name="Tice H."/>
            <person name="Bruce D."/>
            <person name="Goodwin L."/>
            <person name="Pitluck S."/>
            <person name="Sims D."/>
            <person name="Brettin T."/>
            <person name="Detter J.C."/>
            <person name="Han C."/>
            <person name="Kuske C.R."/>
            <person name="Larimer F."/>
            <person name="Land M."/>
            <person name="Hauser L."/>
            <person name="Kyrpides N."/>
            <person name="Lykidis A."/>
            <person name="Borole A.P."/>
        </authorList>
    </citation>
    <scope>NUCLEOTIDE SEQUENCE [LARGE SCALE GENOMIC DNA]</scope>
    <source>
        <strain>ATCC 53993 / BNL-5-31</strain>
    </source>
</reference>
<comment type="function">
    <text evidence="1">Catalyzes the decarboxylative condensation of pimeloyl-[acyl-carrier protein] and L-alanine to produce 8-amino-7-oxononanoate (AON), [acyl-carrier protein], and carbon dioxide.</text>
</comment>
<comment type="catalytic activity">
    <reaction evidence="1">
        <text>6-carboxyhexanoyl-[ACP] + L-alanine + H(+) = (8S)-8-amino-7-oxononanoate + holo-[ACP] + CO2</text>
        <dbReference type="Rhea" id="RHEA:42288"/>
        <dbReference type="Rhea" id="RHEA-COMP:9685"/>
        <dbReference type="Rhea" id="RHEA-COMP:9955"/>
        <dbReference type="ChEBI" id="CHEBI:15378"/>
        <dbReference type="ChEBI" id="CHEBI:16526"/>
        <dbReference type="ChEBI" id="CHEBI:57972"/>
        <dbReference type="ChEBI" id="CHEBI:64479"/>
        <dbReference type="ChEBI" id="CHEBI:78846"/>
        <dbReference type="ChEBI" id="CHEBI:149468"/>
        <dbReference type="EC" id="2.3.1.47"/>
    </reaction>
</comment>
<comment type="cofactor">
    <cofactor evidence="1">
        <name>pyridoxal 5'-phosphate</name>
        <dbReference type="ChEBI" id="CHEBI:597326"/>
    </cofactor>
</comment>
<comment type="pathway">
    <text evidence="1">Cofactor biosynthesis; biotin biosynthesis.</text>
</comment>
<comment type="subunit">
    <text evidence="1">Homodimer.</text>
</comment>
<comment type="similarity">
    <text evidence="1">Belongs to the class-II pyridoxal-phosphate-dependent aminotransferase family. BioF subfamily.</text>
</comment>
<dbReference type="EC" id="2.3.1.47" evidence="1"/>
<dbReference type="EMBL" id="CP001132">
    <property type="protein sequence ID" value="ACH82673.1"/>
    <property type="molecule type" value="Genomic_DNA"/>
</dbReference>
<dbReference type="RefSeq" id="WP_012536041.1">
    <property type="nucleotide sequence ID" value="NC_011206.1"/>
</dbReference>
<dbReference type="SMR" id="B5ELF7"/>
<dbReference type="GeneID" id="65279624"/>
<dbReference type="KEGG" id="afe:Lferr_0419"/>
<dbReference type="eggNOG" id="COG0156">
    <property type="taxonomic scope" value="Bacteria"/>
</dbReference>
<dbReference type="HOGENOM" id="CLU_015846_11_2_6"/>
<dbReference type="UniPathway" id="UPA00078"/>
<dbReference type="GO" id="GO:0008710">
    <property type="term" value="F:8-amino-7-oxononanoate synthase activity"/>
    <property type="evidence" value="ECO:0007669"/>
    <property type="project" value="UniProtKB-UniRule"/>
</dbReference>
<dbReference type="GO" id="GO:0030170">
    <property type="term" value="F:pyridoxal phosphate binding"/>
    <property type="evidence" value="ECO:0007669"/>
    <property type="project" value="UniProtKB-UniRule"/>
</dbReference>
<dbReference type="GO" id="GO:0009102">
    <property type="term" value="P:biotin biosynthetic process"/>
    <property type="evidence" value="ECO:0007669"/>
    <property type="project" value="UniProtKB-UniRule"/>
</dbReference>
<dbReference type="Gene3D" id="3.90.1150.10">
    <property type="entry name" value="Aspartate Aminotransferase, domain 1"/>
    <property type="match status" value="1"/>
</dbReference>
<dbReference type="Gene3D" id="3.40.640.10">
    <property type="entry name" value="Type I PLP-dependent aspartate aminotransferase-like (Major domain)"/>
    <property type="match status" value="1"/>
</dbReference>
<dbReference type="HAMAP" id="MF_01693">
    <property type="entry name" value="BioF_aminotrans_2"/>
    <property type="match status" value="1"/>
</dbReference>
<dbReference type="InterPro" id="IPR001917">
    <property type="entry name" value="Aminotrans_II_pyridoxalP_BS"/>
</dbReference>
<dbReference type="InterPro" id="IPR004839">
    <property type="entry name" value="Aminotransferase_I/II_large"/>
</dbReference>
<dbReference type="InterPro" id="IPR050087">
    <property type="entry name" value="AON_synthase_class-II"/>
</dbReference>
<dbReference type="InterPro" id="IPR004723">
    <property type="entry name" value="AONS_Archaea/Proteobacteria"/>
</dbReference>
<dbReference type="InterPro" id="IPR022834">
    <property type="entry name" value="AONS_Proteobacteria"/>
</dbReference>
<dbReference type="InterPro" id="IPR015424">
    <property type="entry name" value="PyrdxlP-dep_Trfase"/>
</dbReference>
<dbReference type="InterPro" id="IPR015421">
    <property type="entry name" value="PyrdxlP-dep_Trfase_major"/>
</dbReference>
<dbReference type="InterPro" id="IPR015422">
    <property type="entry name" value="PyrdxlP-dep_Trfase_small"/>
</dbReference>
<dbReference type="NCBIfam" id="TIGR00858">
    <property type="entry name" value="bioF"/>
    <property type="match status" value="1"/>
</dbReference>
<dbReference type="PANTHER" id="PTHR13693:SF100">
    <property type="entry name" value="8-AMINO-7-OXONONANOATE SYNTHASE"/>
    <property type="match status" value="1"/>
</dbReference>
<dbReference type="PANTHER" id="PTHR13693">
    <property type="entry name" value="CLASS II AMINOTRANSFERASE/8-AMINO-7-OXONONANOATE SYNTHASE"/>
    <property type="match status" value="1"/>
</dbReference>
<dbReference type="Pfam" id="PF00155">
    <property type="entry name" value="Aminotran_1_2"/>
    <property type="match status" value="1"/>
</dbReference>
<dbReference type="SUPFAM" id="SSF53383">
    <property type="entry name" value="PLP-dependent transferases"/>
    <property type="match status" value="1"/>
</dbReference>
<dbReference type="PROSITE" id="PS00599">
    <property type="entry name" value="AA_TRANSFER_CLASS_2"/>
    <property type="match status" value="1"/>
</dbReference>
<protein>
    <recommendedName>
        <fullName evidence="1">8-amino-7-oxononanoate synthase</fullName>
        <shortName evidence="1">AONS</shortName>
        <ecNumber evidence="1">2.3.1.47</ecNumber>
    </recommendedName>
    <alternativeName>
        <fullName evidence="1">7-keto-8-amino-pelargonic acid synthase</fullName>
        <shortName evidence="1">7-KAP synthase</shortName>
        <shortName evidence="1">KAPA synthase</shortName>
    </alternativeName>
    <alternativeName>
        <fullName evidence="1">8-amino-7-ketopelargonate synthase</fullName>
    </alternativeName>
</protein>
<sequence length="389" mass="41748">MHSEREESWRAELSALRAHDLWRELQVLQPAPERGPPTFVGTRGEPLLSFASNDYLGLSAESALRDAAIAEIQQSGVGAGAAPLLGGERPAHAVLANALARWLGVEAALLFGSGYLANLGVISTLVGRGDRVYADRLNHASLVDGVRLSGARLHRYRHGDMTHLAQWLERGGRGQAWIITDGVFSMDGDIAPLPELATLAQQYGAGIILDEAHAFGVLGTEGQGTAAHWNMDIHGVDVIMGTLGKAFGVYGAFVAGSQDVVDLLRNRARSFIYHTALPSALAAAALVALDLLRHGDARRERLTQHRQHLRAQVPDAPWLASETPIQGLLLGDARRALTVSAQLRRAGLYCPAVRPPTVPADSARLRITLSAAHSHDDIELLATTLREVL</sequence>
<feature type="chain" id="PRO_0000380886" description="8-amino-7-oxononanoate synthase">
    <location>
        <begin position="1"/>
        <end position="389"/>
    </location>
</feature>
<feature type="binding site" evidence="1">
    <location>
        <position position="23"/>
    </location>
    <ligand>
        <name>substrate</name>
    </ligand>
</feature>
<feature type="binding site" evidence="1">
    <location>
        <begin position="114"/>
        <end position="115"/>
    </location>
    <ligand>
        <name>pyridoxal 5'-phosphate</name>
        <dbReference type="ChEBI" id="CHEBI:597326"/>
    </ligand>
</feature>
<feature type="binding site" evidence="1">
    <location>
        <position position="139"/>
    </location>
    <ligand>
        <name>substrate</name>
    </ligand>
</feature>
<feature type="binding site" evidence="1">
    <location>
        <position position="185"/>
    </location>
    <ligand>
        <name>pyridoxal 5'-phosphate</name>
        <dbReference type="ChEBI" id="CHEBI:597326"/>
    </ligand>
</feature>
<feature type="binding site" evidence="1">
    <location>
        <position position="213"/>
    </location>
    <ligand>
        <name>pyridoxal 5'-phosphate</name>
        <dbReference type="ChEBI" id="CHEBI:597326"/>
    </ligand>
</feature>
<feature type="binding site" evidence="1">
    <location>
        <position position="242"/>
    </location>
    <ligand>
        <name>pyridoxal 5'-phosphate</name>
        <dbReference type="ChEBI" id="CHEBI:597326"/>
    </ligand>
</feature>
<feature type="binding site" evidence="1">
    <location>
        <position position="357"/>
    </location>
    <ligand>
        <name>substrate</name>
    </ligand>
</feature>
<feature type="modified residue" description="N6-(pyridoxal phosphate)lysine" evidence="1">
    <location>
        <position position="245"/>
    </location>
</feature>
<evidence type="ECO:0000255" key="1">
    <source>
        <dbReference type="HAMAP-Rule" id="MF_01693"/>
    </source>
</evidence>
<proteinExistence type="inferred from homology"/>
<organism>
    <name type="scientific">Acidithiobacillus ferrooxidans (strain ATCC 53993 / BNL-5-31)</name>
    <name type="common">Leptospirillum ferrooxidans (ATCC 53993)</name>
    <dbReference type="NCBI Taxonomy" id="380394"/>
    <lineage>
        <taxon>Bacteria</taxon>
        <taxon>Pseudomonadati</taxon>
        <taxon>Pseudomonadota</taxon>
        <taxon>Acidithiobacillia</taxon>
        <taxon>Acidithiobacillales</taxon>
        <taxon>Acidithiobacillaceae</taxon>
        <taxon>Acidithiobacillus</taxon>
    </lineage>
</organism>
<gene>
    <name evidence="1" type="primary">bioF</name>
    <name type="ordered locus">Lferr_0419</name>
</gene>
<accession>B5ELF7</accession>